<feature type="chain" id="PRO_1000062229" description="Biosynthetic peptidoglycan transglycosylase">
    <location>
        <begin position="1"/>
        <end position="245"/>
    </location>
</feature>
<feature type="transmembrane region" description="Helical" evidence="1">
    <location>
        <begin position="29"/>
        <end position="49"/>
    </location>
</feature>
<keyword id="KW-0997">Cell inner membrane</keyword>
<keyword id="KW-1003">Cell membrane</keyword>
<keyword id="KW-0133">Cell shape</keyword>
<keyword id="KW-0961">Cell wall biogenesis/degradation</keyword>
<keyword id="KW-0328">Glycosyltransferase</keyword>
<keyword id="KW-0472">Membrane</keyword>
<keyword id="KW-0573">Peptidoglycan synthesis</keyword>
<keyword id="KW-1185">Reference proteome</keyword>
<keyword id="KW-0808">Transferase</keyword>
<keyword id="KW-0812">Transmembrane</keyword>
<keyword id="KW-1133">Transmembrane helix</keyword>
<comment type="function">
    <text evidence="1">Peptidoglycan polymerase that catalyzes glycan chain elongation from lipid-linked precursors.</text>
</comment>
<comment type="catalytic activity">
    <reaction evidence="1">
        <text>[GlcNAc-(1-&gt;4)-Mur2Ac(oyl-L-Ala-gamma-D-Glu-L-Lys-D-Ala-D-Ala)](n)-di-trans,octa-cis-undecaprenyl diphosphate + beta-D-GlcNAc-(1-&gt;4)-Mur2Ac(oyl-L-Ala-gamma-D-Glu-L-Lys-D-Ala-D-Ala)-di-trans,octa-cis-undecaprenyl diphosphate = [GlcNAc-(1-&gt;4)-Mur2Ac(oyl-L-Ala-gamma-D-Glu-L-Lys-D-Ala-D-Ala)](n+1)-di-trans,octa-cis-undecaprenyl diphosphate + di-trans,octa-cis-undecaprenyl diphosphate + H(+)</text>
        <dbReference type="Rhea" id="RHEA:23708"/>
        <dbReference type="Rhea" id="RHEA-COMP:9602"/>
        <dbReference type="Rhea" id="RHEA-COMP:9603"/>
        <dbReference type="ChEBI" id="CHEBI:15378"/>
        <dbReference type="ChEBI" id="CHEBI:58405"/>
        <dbReference type="ChEBI" id="CHEBI:60033"/>
        <dbReference type="ChEBI" id="CHEBI:78435"/>
        <dbReference type="EC" id="2.4.99.28"/>
    </reaction>
</comment>
<comment type="pathway">
    <text evidence="1">Cell wall biogenesis; peptidoglycan biosynthesis.</text>
</comment>
<comment type="subcellular location">
    <subcellularLocation>
        <location evidence="1">Cell inner membrane</location>
        <topology evidence="1">Single-pass membrane protein</topology>
    </subcellularLocation>
</comment>
<comment type="similarity">
    <text evidence="1">Belongs to the glycosyltransferase 51 family.</text>
</comment>
<dbReference type="EC" id="2.4.99.28" evidence="1"/>
<dbReference type="EMBL" id="CP000507">
    <property type="protein sequence ID" value="ABL98948.1"/>
    <property type="molecule type" value="Genomic_DNA"/>
</dbReference>
<dbReference type="RefSeq" id="WP_011758858.1">
    <property type="nucleotide sequence ID" value="NC_008700.1"/>
</dbReference>
<dbReference type="SMR" id="A1S3J2"/>
<dbReference type="STRING" id="326297.Sama_0740"/>
<dbReference type="CAZy" id="GT51">
    <property type="family name" value="Glycosyltransferase Family 51"/>
</dbReference>
<dbReference type="KEGG" id="saz:Sama_0740"/>
<dbReference type="eggNOG" id="COG0744">
    <property type="taxonomic scope" value="Bacteria"/>
</dbReference>
<dbReference type="HOGENOM" id="CLU_006354_1_1_6"/>
<dbReference type="OrthoDB" id="9766909at2"/>
<dbReference type="UniPathway" id="UPA00219"/>
<dbReference type="Proteomes" id="UP000009175">
    <property type="component" value="Chromosome"/>
</dbReference>
<dbReference type="GO" id="GO:0009274">
    <property type="term" value="C:peptidoglycan-based cell wall"/>
    <property type="evidence" value="ECO:0007669"/>
    <property type="project" value="InterPro"/>
</dbReference>
<dbReference type="GO" id="GO:0005886">
    <property type="term" value="C:plasma membrane"/>
    <property type="evidence" value="ECO:0007669"/>
    <property type="project" value="UniProtKB-SubCell"/>
</dbReference>
<dbReference type="GO" id="GO:0016763">
    <property type="term" value="F:pentosyltransferase activity"/>
    <property type="evidence" value="ECO:0007669"/>
    <property type="project" value="InterPro"/>
</dbReference>
<dbReference type="GO" id="GO:0008955">
    <property type="term" value="F:peptidoglycan glycosyltransferase activity"/>
    <property type="evidence" value="ECO:0007669"/>
    <property type="project" value="UniProtKB-UniRule"/>
</dbReference>
<dbReference type="GO" id="GO:0071555">
    <property type="term" value="P:cell wall organization"/>
    <property type="evidence" value="ECO:0007669"/>
    <property type="project" value="UniProtKB-KW"/>
</dbReference>
<dbReference type="GO" id="GO:0009252">
    <property type="term" value="P:peptidoglycan biosynthetic process"/>
    <property type="evidence" value="ECO:0007669"/>
    <property type="project" value="UniProtKB-UniRule"/>
</dbReference>
<dbReference type="GO" id="GO:0008360">
    <property type="term" value="P:regulation of cell shape"/>
    <property type="evidence" value="ECO:0007669"/>
    <property type="project" value="UniProtKB-KW"/>
</dbReference>
<dbReference type="Gene3D" id="1.10.3810.10">
    <property type="entry name" value="Biosynthetic peptidoglycan transglycosylase-like"/>
    <property type="match status" value="1"/>
</dbReference>
<dbReference type="HAMAP" id="MF_00766">
    <property type="entry name" value="PGT_MtgA"/>
    <property type="match status" value="1"/>
</dbReference>
<dbReference type="InterPro" id="IPR001264">
    <property type="entry name" value="Glyco_trans_51"/>
</dbReference>
<dbReference type="InterPro" id="IPR023346">
    <property type="entry name" value="Lysozyme-like_dom_sf"/>
</dbReference>
<dbReference type="InterPro" id="IPR036950">
    <property type="entry name" value="PBP_transglycosylase"/>
</dbReference>
<dbReference type="InterPro" id="IPR011812">
    <property type="entry name" value="Pep_trsgly"/>
</dbReference>
<dbReference type="NCBIfam" id="TIGR02070">
    <property type="entry name" value="mono_pep_trsgly"/>
    <property type="match status" value="1"/>
</dbReference>
<dbReference type="PANTHER" id="PTHR30400:SF0">
    <property type="entry name" value="BIOSYNTHETIC PEPTIDOGLYCAN TRANSGLYCOSYLASE"/>
    <property type="match status" value="1"/>
</dbReference>
<dbReference type="PANTHER" id="PTHR30400">
    <property type="entry name" value="MONOFUNCTIONAL BIOSYNTHETIC PEPTIDOGLYCAN TRANSGLYCOSYLASE"/>
    <property type="match status" value="1"/>
</dbReference>
<dbReference type="Pfam" id="PF00912">
    <property type="entry name" value="Transgly"/>
    <property type="match status" value="1"/>
</dbReference>
<dbReference type="SUPFAM" id="SSF53955">
    <property type="entry name" value="Lysozyme-like"/>
    <property type="match status" value="1"/>
</dbReference>
<evidence type="ECO:0000255" key="1">
    <source>
        <dbReference type="HAMAP-Rule" id="MF_00766"/>
    </source>
</evidence>
<protein>
    <recommendedName>
        <fullName evidence="1">Biosynthetic peptidoglycan transglycosylase</fullName>
        <ecNumber evidence="1">2.4.99.28</ecNumber>
    </recommendedName>
    <alternativeName>
        <fullName evidence="1">Glycan polymerase</fullName>
    </alternativeName>
    <alternativeName>
        <fullName evidence="1">Peptidoglycan glycosyltransferase MtgA</fullName>
        <shortName evidence="1">PGT</shortName>
    </alternativeName>
</protein>
<gene>
    <name evidence="1" type="primary">mtgA</name>
    <name type="ordered locus">Sama_0740</name>
</gene>
<reference key="1">
    <citation type="submission" date="2006-12" db="EMBL/GenBank/DDBJ databases">
        <title>Complete sequence of Shewanella amazonensis SB2B.</title>
        <authorList>
            <consortium name="US DOE Joint Genome Institute"/>
            <person name="Copeland A."/>
            <person name="Lucas S."/>
            <person name="Lapidus A."/>
            <person name="Barry K."/>
            <person name="Detter J.C."/>
            <person name="Glavina del Rio T."/>
            <person name="Hammon N."/>
            <person name="Israni S."/>
            <person name="Dalin E."/>
            <person name="Tice H."/>
            <person name="Pitluck S."/>
            <person name="Munk A.C."/>
            <person name="Brettin T."/>
            <person name="Bruce D."/>
            <person name="Han C."/>
            <person name="Tapia R."/>
            <person name="Gilna P."/>
            <person name="Schmutz J."/>
            <person name="Larimer F."/>
            <person name="Land M."/>
            <person name="Hauser L."/>
            <person name="Kyrpides N."/>
            <person name="Mikhailova N."/>
            <person name="Fredrickson J."/>
            <person name="Richardson P."/>
        </authorList>
    </citation>
    <scope>NUCLEOTIDE SEQUENCE [LARGE SCALE GENOMIC DNA]</scope>
    <source>
        <strain>ATCC BAA-1098 / SB2B</strain>
    </source>
</reference>
<name>MTGA_SHEAM</name>
<organism>
    <name type="scientific">Shewanella amazonensis (strain ATCC BAA-1098 / SB2B)</name>
    <dbReference type="NCBI Taxonomy" id="326297"/>
    <lineage>
        <taxon>Bacteria</taxon>
        <taxon>Pseudomonadati</taxon>
        <taxon>Pseudomonadota</taxon>
        <taxon>Gammaproteobacteria</taxon>
        <taxon>Alteromonadales</taxon>
        <taxon>Shewanellaceae</taxon>
        <taxon>Shewanella</taxon>
    </lineage>
</organism>
<accession>A1S3J2</accession>
<proteinExistence type="inferred from homology"/>
<sequence>MSEKDLGGGKKAGFIARTWRGFWRWSARLLVAFLILSLVLVATVSVINPPTWAWRIDRALFPPKEDIQVRHQWVPLDKIAAHMQLAVIAAEDQRFTLHNGVDFAAIKTAIADRDPGEPLRGASTLTQQTAKNLFLWSSRSFVRKGLEAWFALLLDTLSGKRRTLELYLNIVEFGPGIYGVEAASRYYFNKGAGKLSTREAALLAALLPNPWSYRINPPTAYMNRRADWIARQMRQLGMATLKDLD</sequence>